<keyword id="KW-0687">Ribonucleoprotein</keyword>
<keyword id="KW-0689">Ribosomal protein</keyword>
<sequence>MVLSCELTLKELLESGAHFGHQTSRWNPKMKPFIFEEKNGLYIIDLAKTLAQLKKAVSCIQKTVEQGKSILFVGTKKQAKQIIKEAAIECGEFFASERWLGGMLTNMATIRNSVKTLNNIEIDLASSNSVLTKKETALLAKRHRKLLNNLEGVRHMNSLPGLLVVIDPGYERIAVAEAGKLGIPVMALVDTNCDPTPINHVIPCNDDSIKSIRLIVNALKDAIIDTKKRSGFEILSPVRPIERPAEEIVEGLPLPNEAQNDANSKEGFLVWTDTDNSEALR</sequence>
<proteinExistence type="inferred from homology"/>
<gene>
    <name type="primary">rpsB</name>
    <name type="ordered locus">TC_0051</name>
</gene>
<organism>
    <name type="scientific">Chlamydia muridarum (strain MoPn / Nigg)</name>
    <dbReference type="NCBI Taxonomy" id="243161"/>
    <lineage>
        <taxon>Bacteria</taxon>
        <taxon>Pseudomonadati</taxon>
        <taxon>Chlamydiota</taxon>
        <taxon>Chlamydiia</taxon>
        <taxon>Chlamydiales</taxon>
        <taxon>Chlamydiaceae</taxon>
        <taxon>Chlamydia/Chlamydophila group</taxon>
        <taxon>Chlamydia</taxon>
    </lineage>
</organism>
<dbReference type="EMBL" id="U60196">
    <property type="protein sequence ID" value="AAB07069.1"/>
    <property type="molecule type" value="Genomic_DNA"/>
</dbReference>
<dbReference type="EMBL" id="AE002160">
    <property type="protein sequence ID" value="AAF38940.1"/>
    <property type="molecule type" value="Genomic_DNA"/>
</dbReference>
<dbReference type="PIR" id="B81747">
    <property type="entry name" value="B81747"/>
</dbReference>
<dbReference type="SMR" id="P71145"/>
<dbReference type="KEGG" id="cmu:TC_0051"/>
<dbReference type="eggNOG" id="COG0052">
    <property type="taxonomic scope" value="Bacteria"/>
</dbReference>
<dbReference type="HOGENOM" id="CLU_040318_1_3_0"/>
<dbReference type="OrthoDB" id="9808036at2"/>
<dbReference type="Proteomes" id="UP000000800">
    <property type="component" value="Chromosome"/>
</dbReference>
<dbReference type="GO" id="GO:0022627">
    <property type="term" value="C:cytosolic small ribosomal subunit"/>
    <property type="evidence" value="ECO:0007669"/>
    <property type="project" value="TreeGrafter"/>
</dbReference>
<dbReference type="GO" id="GO:0003735">
    <property type="term" value="F:structural constituent of ribosome"/>
    <property type="evidence" value="ECO:0007669"/>
    <property type="project" value="InterPro"/>
</dbReference>
<dbReference type="GO" id="GO:0006412">
    <property type="term" value="P:translation"/>
    <property type="evidence" value="ECO:0007669"/>
    <property type="project" value="UniProtKB-UniRule"/>
</dbReference>
<dbReference type="CDD" id="cd01425">
    <property type="entry name" value="RPS2"/>
    <property type="match status" value="1"/>
</dbReference>
<dbReference type="Gene3D" id="3.40.50.10490">
    <property type="entry name" value="Glucose-6-phosphate isomerase like protein, domain 1"/>
    <property type="match status" value="1"/>
</dbReference>
<dbReference type="Gene3D" id="1.10.287.610">
    <property type="entry name" value="Helix hairpin bin"/>
    <property type="match status" value="1"/>
</dbReference>
<dbReference type="HAMAP" id="MF_00291_B">
    <property type="entry name" value="Ribosomal_uS2_B"/>
    <property type="match status" value="1"/>
</dbReference>
<dbReference type="InterPro" id="IPR001865">
    <property type="entry name" value="Ribosomal_uS2"/>
</dbReference>
<dbReference type="InterPro" id="IPR005706">
    <property type="entry name" value="Ribosomal_uS2_bac/mit/plastid"/>
</dbReference>
<dbReference type="InterPro" id="IPR018130">
    <property type="entry name" value="Ribosomal_uS2_CS"/>
</dbReference>
<dbReference type="InterPro" id="IPR023591">
    <property type="entry name" value="Ribosomal_uS2_flav_dom_sf"/>
</dbReference>
<dbReference type="NCBIfam" id="TIGR01011">
    <property type="entry name" value="rpsB_bact"/>
    <property type="match status" value="1"/>
</dbReference>
<dbReference type="PANTHER" id="PTHR12534">
    <property type="entry name" value="30S RIBOSOMAL PROTEIN S2 PROKARYOTIC AND ORGANELLAR"/>
    <property type="match status" value="1"/>
</dbReference>
<dbReference type="PANTHER" id="PTHR12534:SF0">
    <property type="entry name" value="SMALL RIBOSOMAL SUBUNIT PROTEIN US2M"/>
    <property type="match status" value="1"/>
</dbReference>
<dbReference type="Pfam" id="PF00318">
    <property type="entry name" value="Ribosomal_S2"/>
    <property type="match status" value="1"/>
</dbReference>
<dbReference type="PRINTS" id="PR00395">
    <property type="entry name" value="RIBOSOMALS2"/>
</dbReference>
<dbReference type="SUPFAM" id="SSF52313">
    <property type="entry name" value="Ribosomal protein S2"/>
    <property type="match status" value="1"/>
</dbReference>
<dbReference type="PROSITE" id="PS00962">
    <property type="entry name" value="RIBOSOMAL_S2_1"/>
    <property type="match status" value="1"/>
</dbReference>
<dbReference type="PROSITE" id="PS00963">
    <property type="entry name" value="RIBOSOMAL_S2_2"/>
    <property type="match status" value="1"/>
</dbReference>
<protein>
    <recommendedName>
        <fullName evidence="1">Small ribosomal subunit protein uS2</fullName>
    </recommendedName>
    <alternativeName>
        <fullName>30S ribosomal protein S2</fullName>
    </alternativeName>
</protein>
<name>RS2_CHLMU</name>
<reference key="1">
    <citation type="journal article" date="1997" name="Arch. Biochem. Biophys.">
        <title>Elongation factor Ts of Chlamydia trachomatis: structure of the gene and properties of the protein.</title>
        <authorList>
            <person name="Zhang Y.X."/>
            <person name="Tao J."/>
            <person name="Zhou M."/>
            <person name="Meng Q."/>
            <person name="Zhang L."/>
            <person name="Shen L."/>
            <person name="Klein R."/>
            <person name="Miller D.L."/>
        </authorList>
    </citation>
    <scope>NUCLEOTIDE SEQUENCE [GENOMIC DNA]</scope>
    <source>
        <strain>MoPn</strain>
    </source>
</reference>
<reference key="2">
    <citation type="journal article" date="2000" name="Nucleic Acids Res.">
        <title>Genome sequences of Chlamydia trachomatis MoPn and Chlamydia pneumoniae AR39.</title>
        <authorList>
            <person name="Read T.D."/>
            <person name="Brunham R.C."/>
            <person name="Shen C."/>
            <person name="Gill S.R."/>
            <person name="Heidelberg J.F."/>
            <person name="White O."/>
            <person name="Hickey E.K."/>
            <person name="Peterson J.D."/>
            <person name="Utterback T.R."/>
            <person name="Berry K.J."/>
            <person name="Bass S."/>
            <person name="Linher K.D."/>
            <person name="Weidman J.F."/>
            <person name="Khouri H.M."/>
            <person name="Craven B."/>
            <person name="Bowman C."/>
            <person name="Dodson R.J."/>
            <person name="Gwinn M.L."/>
            <person name="Nelson W.C."/>
            <person name="DeBoy R.T."/>
            <person name="Kolonay J.F."/>
            <person name="McClarty G."/>
            <person name="Salzberg S.L."/>
            <person name="Eisen J.A."/>
            <person name="Fraser C.M."/>
        </authorList>
    </citation>
    <scope>NUCLEOTIDE SEQUENCE [LARGE SCALE GENOMIC DNA]</scope>
    <source>
        <strain>MoPn / Nigg</strain>
    </source>
</reference>
<feature type="chain" id="PRO_0000134151" description="Small ribosomal subunit protein uS2">
    <location>
        <begin position="1"/>
        <end position="281"/>
    </location>
</feature>
<feature type="sequence conflict" description="In Ref. 1; AAB07069." evidence="1" ref="1">
    <original>A</original>
    <variation>R</variation>
    <location>
        <position position="176"/>
    </location>
</feature>
<comment type="similarity">
    <text evidence="1">Belongs to the universal ribosomal protein uS2 family.</text>
</comment>
<accession>P71145</accession>
<evidence type="ECO:0000305" key="1"/>